<comment type="function">
    <text evidence="1">Component of the acetyl coenzyme A carboxylase (ACC) complex. Biotin carboxylase (BC) catalyzes the carboxylation of biotin on its carrier protein (BCCP) and then the CO(2) group is transferred by the transcarboxylase to acetyl-CoA to form malonyl-CoA.</text>
</comment>
<comment type="catalytic activity">
    <reaction evidence="1">
        <text>N(6)-carboxybiotinyl-L-lysyl-[protein] + acetyl-CoA = N(6)-biotinyl-L-lysyl-[protein] + malonyl-CoA</text>
        <dbReference type="Rhea" id="RHEA:54728"/>
        <dbReference type="Rhea" id="RHEA-COMP:10505"/>
        <dbReference type="Rhea" id="RHEA-COMP:10506"/>
        <dbReference type="ChEBI" id="CHEBI:57288"/>
        <dbReference type="ChEBI" id="CHEBI:57384"/>
        <dbReference type="ChEBI" id="CHEBI:83144"/>
        <dbReference type="ChEBI" id="CHEBI:83145"/>
        <dbReference type="EC" id="2.1.3.15"/>
    </reaction>
</comment>
<comment type="cofactor">
    <cofactor evidence="1">
        <name>Zn(2+)</name>
        <dbReference type="ChEBI" id="CHEBI:29105"/>
    </cofactor>
    <text evidence="1">Binds 1 zinc ion per subunit.</text>
</comment>
<comment type="pathway">
    <text evidence="1">Lipid metabolism; malonyl-CoA biosynthesis; malonyl-CoA from acetyl-CoA: step 1/1.</text>
</comment>
<comment type="subunit">
    <text evidence="1">Acetyl-CoA carboxylase is a heterohexamer composed of biotin carboxyl carrier protein (AccB), biotin carboxylase (AccC) and two subunits each of ACCase subunit alpha (AccA) and ACCase subunit beta (AccD).</text>
</comment>
<comment type="subcellular location">
    <subcellularLocation>
        <location evidence="1">Cytoplasm</location>
    </subcellularLocation>
</comment>
<comment type="similarity">
    <text evidence="1">Belongs to the AccD/PCCB family.</text>
</comment>
<dbReference type="EC" id="2.1.3.15" evidence="1"/>
<dbReference type="EMBL" id="AL935263">
    <property type="protein sequence ID" value="CCC78982.1"/>
    <property type="molecule type" value="Genomic_DNA"/>
</dbReference>
<dbReference type="RefSeq" id="YP_004889496.1">
    <property type="nucleotide sequence ID" value="NC_004567.2"/>
</dbReference>
<dbReference type="SMR" id="Q88WG0"/>
<dbReference type="STRING" id="220668.lp_1679"/>
<dbReference type="EnsemblBacteria" id="CCC78982">
    <property type="protein sequence ID" value="CCC78982"/>
    <property type="gene ID" value="lp_1679"/>
</dbReference>
<dbReference type="KEGG" id="lpl:lp_1679"/>
<dbReference type="PATRIC" id="fig|220668.9.peg.1418"/>
<dbReference type="eggNOG" id="COG0777">
    <property type="taxonomic scope" value="Bacteria"/>
</dbReference>
<dbReference type="HOGENOM" id="CLU_015486_1_1_9"/>
<dbReference type="OrthoDB" id="9772975at2"/>
<dbReference type="PhylomeDB" id="Q88WG0"/>
<dbReference type="UniPathway" id="UPA00655">
    <property type="reaction ID" value="UER00711"/>
</dbReference>
<dbReference type="Proteomes" id="UP000000432">
    <property type="component" value="Chromosome"/>
</dbReference>
<dbReference type="GO" id="GO:0009317">
    <property type="term" value="C:acetyl-CoA carboxylase complex"/>
    <property type="evidence" value="ECO:0007669"/>
    <property type="project" value="InterPro"/>
</dbReference>
<dbReference type="GO" id="GO:0003989">
    <property type="term" value="F:acetyl-CoA carboxylase activity"/>
    <property type="evidence" value="ECO:0007669"/>
    <property type="project" value="InterPro"/>
</dbReference>
<dbReference type="GO" id="GO:0005524">
    <property type="term" value="F:ATP binding"/>
    <property type="evidence" value="ECO:0007669"/>
    <property type="project" value="UniProtKB-KW"/>
</dbReference>
<dbReference type="GO" id="GO:0016743">
    <property type="term" value="F:carboxyl- or carbamoyltransferase activity"/>
    <property type="evidence" value="ECO:0007669"/>
    <property type="project" value="UniProtKB-UniRule"/>
</dbReference>
<dbReference type="GO" id="GO:0008270">
    <property type="term" value="F:zinc ion binding"/>
    <property type="evidence" value="ECO:0007669"/>
    <property type="project" value="UniProtKB-UniRule"/>
</dbReference>
<dbReference type="GO" id="GO:0006633">
    <property type="term" value="P:fatty acid biosynthetic process"/>
    <property type="evidence" value="ECO:0007669"/>
    <property type="project" value="UniProtKB-KW"/>
</dbReference>
<dbReference type="GO" id="GO:2001295">
    <property type="term" value="P:malonyl-CoA biosynthetic process"/>
    <property type="evidence" value="ECO:0007669"/>
    <property type="project" value="UniProtKB-UniRule"/>
</dbReference>
<dbReference type="Gene3D" id="3.90.226.10">
    <property type="entry name" value="2-enoyl-CoA Hydratase, Chain A, domain 1"/>
    <property type="match status" value="1"/>
</dbReference>
<dbReference type="HAMAP" id="MF_01395">
    <property type="entry name" value="AcetylCoA_CT_beta"/>
    <property type="match status" value="1"/>
</dbReference>
<dbReference type="InterPro" id="IPR034733">
    <property type="entry name" value="AcCoA_carboxyl_beta"/>
</dbReference>
<dbReference type="InterPro" id="IPR000438">
    <property type="entry name" value="Acetyl_CoA_COase_Trfase_b_su"/>
</dbReference>
<dbReference type="InterPro" id="IPR029045">
    <property type="entry name" value="ClpP/crotonase-like_dom_sf"/>
</dbReference>
<dbReference type="InterPro" id="IPR011762">
    <property type="entry name" value="COA_CT_N"/>
</dbReference>
<dbReference type="PANTHER" id="PTHR42995">
    <property type="entry name" value="ACETYL-COENZYME A CARBOXYLASE CARBOXYL TRANSFERASE SUBUNIT BETA, CHLOROPLASTIC"/>
    <property type="match status" value="1"/>
</dbReference>
<dbReference type="PANTHER" id="PTHR42995:SF5">
    <property type="entry name" value="ACETYL-COENZYME A CARBOXYLASE CARBOXYL TRANSFERASE SUBUNIT BETA, CHLOROPLASTIC"/>
    <property type="match status" value="1"/>
</dbReference>
<dbReference type="Pfam" id="PF01039">
    <property type="entry name" value="Carboxyl_trans"/>
    <property type="match status" value="1"/>
</dbReference>
<dbReference type="PRINTS" id="PR01070">
    <property type="entry name" value="ACCCTRFRASEB"/>
</dbReference>
<dbReference type="SUPFAM" id="SSF52096">
    <property type="entry name" value="ClpP/crotonase"/>
    <property type="match status" value="1"/>
</dbReference>
<dbReference type="PROSITE" id="PS50980">
    <property type="entry name" value="COA_CT_NTER"/>
    <property type="match status" value="1"/>
</dbReference>
<feature type="chain" id="PRO_0000389767" description="Acetyl-coenzyme A carboxylase carboxyl transferase subunit beta 2">
    <location>
        <begin position="1"/>
        <end position="281"/>
    </location>
</feature>
<feature type="domain" description="CoA carboxyltransferase N-terminal" evidence="2">
    <location>
        <begin position="26"/>
        <end position="281"/>
    </location>
</feature>
<feature type="zinc finger region" description="C4-type" evidence="1">
    <location>
        <begin position="30"/>
        <end position="51"/>
    </location>
</feature>
<feature type="binding site" evidence="1">
    <location>
        <position position="30"/>
    </location>
    <ligand>
        <name>Zn(2+)</name>
        <dbReference type="ChEBI" id="CHEBI:29105"/>
    </ligand>
</feature>
<feature type="binding site" evidence="1">
    <location>
        <position position="33"/>
    </location>
    <ligand>
        <name>Zn(2+)</name>
        <dbReference type="ChEBI" id="CHEBI:29105"/>
    </ligand>
</feature>
<feature type="binding site" evidence="1">
    <location>
        <position position="48"/>
    </location>
    <ligand>
        <name>Zn(2+)</name>
        <dbReference type="ChEBI" id="CHEBI:29105"/>
    </ligand>
</feature>
<feature type="binding site" evidence="1">
    <location>
        <position position="51"/>
    </location>
    <ligand>
        <name>Zn(2+)</name>
        <dbReference type="ChEBI" id="CHEBI:29105"/>
    </ligand>
</feature>
<proteinExistence type="inferred from homology"/>
<sequence length="281" mass="30944">MMPKRKFQAPTERQLAVRRDNIPDALLTRCPVCHEDCYTQDLGEFKVCPHCDYGFRLPAWQRVQQLTASFEERDADLSAPVSFDDPAYLEKLQRAKAASHLNESVLTGIGTLATYQFGLGVMETKFMMGSLGAATGEKITRLFETCTTQKLPVVMVTASGGARMQEGARALMQMAKVSTAVANHRKAGLLYITILTDPTTGGVTASFAMQGDIMLSEPRALIGFAGRRVIEQTIQQTPPADFQRAETLLANGWLDQIVPRPALRKTLQRLLTITQGGHQDV</sequence>
<accession>Q88WG0</accession>
<accession>F9UP43</accession>
<protein>
    <recommendedName>
        <fullName evidence="1">Acetyl-coenzyme A carboxylase carboxyl transferase subunit beta 2</fullName>
        <shortName evidence="1">ACCase subunit beta 2</shortName>
        <shortName evidence="1">Acetyl-CoA carboxylase carboxyltransferase subunit beta 2</shortName>
        <ecNumber evidence="1">2.1.3.15</ecNumber>
    </recommendedName>
</protein>
<name>ACCD2_LACPL</name>
<evidence type="ECO:0000255" key="1">
    <source>
        <dbReference type="HAMAP-Rule" id="MF_01395"/>
    </source>
</evidence>
<evidence type="ECO:0000255" key="2">
    <source>
        <dbReference type="PROSITE-ProRule" id="PRU01136"/>
    </source>
</evidence>
<gene>
    <name evidence="1" type="primary">accD2</name>
    <name type="ordered locus">lp_1679</name>
</gene>
<organism>
    <name type="scientific">Lactiplantibacillus plantarum (strain ATCC BAA-793 / NCIMB 8826 / WCFS1)</name>
    <name type="common">Lactobacillus plantarum</name>
    <dbReference type="NCBI Taxonomy" id="220668"/>
    <lineage>
        <taxon>Bacteria</taxon>
        <taxon>Bacillati</taxon>
        <taxon>Bacillota</taxon>
        <taxon>Bacilli</taxon>
        <taxon>Lactobacillales</taxon>
        <taxon>Lactobacillaceae</taxon>
        <taxon>Lactiplantibacillus</taxon>
    </lineage>
</organism>
<keyword id="KW-0067">ATP-binding</keyword>
<keyword id="KW-0963">Cytoplasm</keyword>
<keyword id="KW-0275">Fatty acid biosynthesis</keyword>
<keyword id="KW-0276">Fatty acid metabolism</keyword>
<keyword id="KW-0444">Lipid biosynthesis</keyword>
<keyword id="KW-0443">Lipid metabolism</keyword>
<keyword id="KW-0479">Metal-binding</keyword>
<keyword id="KW-0547">Nucleotide-binding</keyword>
<keyword id="KW-1185">Reference proteome</keyword>
<keyword id="KW-0808">Transferase</keyword>
<keyword id="KW-0862">Zinc</keyword>
<keyword id="KW-0863">Zinc-finger</keyword>
<reference key="1">
    <citation type="journal article" date="2003" name="Proc. Natl. Acad. Sci. U.S.A.">
        <title>Complete genome sequence of Lactobacillus plantarum WCFS1.</title>
        <authorList>
            <person name="Kleerebezem M."/>
            <person name="Boekhorst J."/>
            <person name="van Kranenburg R."/>
            <person name="Molenaar D."/>
            <person name="Kuipers O.P."/>
            <person name="Leer R."/>
            <person name="Tarchini R."/>
            <person name="Peters S.A."/>
            <person name="Sandbrink H.M."/>
            <person name="Fiers M.W.E.J."/>
            <person name="Stiekema W."/>
            <person name="Klein Lankhorst R.M."/>
            <person name="Bron P.A."/>
            <person name="Hoffer S.M."/>
            <person name="Nierop Groot M.N."/>
            <person name="Kerkhoven R."/>
            <person name="De Vries M."/>
            <person name="Ursing B."/>
            <person name="De Vos W.M."/>
            <person name="Siezen R.J."/>
        </authorList>
    </citation>
    <scope>NUCLEOTIDE SEQUENCE [LARGE SCALE GENOMIC DNA]</scope>
    <source>
        <strain>ATCC BAA-793 / NCIMB 8826 / WCFS1</strain>
    </source>
</reference>
<reference key="2">
    <citation type="journal article" date="2012" name="J. Bacteriol.">
        <title>Complete resequencing and reannotation of the Lactobacillus plantarum WCFS1 genome.</title>
        <authorList>
            <person name="Siezen R.J."/>
            <person name="Francke C."/>
            <person name="Renckens B."/>
            <person name="Boekhorst J."/>
            <person name="Wels M."/>
            <person name="Kleerebezem M."/>
            <person name="van Hijum S.A."/>
        </authorList>
    </citation>
    <scope>NUCLEOTIDE SEQUENCE [LARGE SCALE GENOMIC DNA]</scope>
    <scope>GENOME REANNOTATION</scope>
    <source>
        <strain>ATCC BAA-793 / NCIMB 8826 / WCFS1</strain>
    </source>
</reference>